<protein>
    <recommendedName>
        <fullName evidence="1">Adenylosuccinate synthetase</fullName>
        <shortName evidence="1">AMPSase</shortName>
        <shortName evidence="1">AdSS</shortName>
        <ecNumber evidence="1">6.3.4.4</ecNumber>
    </recommendedName>
    <alternativeName>
        <fullName evidence="1">IMP--aspartate ligase</fullName>
    </alternativeName>
</protein>
<dbReference type="EC" id="6.3.4.4" evidence="1"/>
<dbReference type="EMBL" id="CP000901">
    <property type="protein sequence ID" value="ABX87502.1"/>
    <property type="molecule type" value="Genomic_DNA"/>
</dbReference>
<dbReference type="RefSeq" id="WP_002209157.1">
    <property type="nucleotide sequence ID" value="NZ_CP009935.1"/>
</dbReference>
<dbReference type="SMR" id="A9QYM6"/>
<dbReference type="KEGG" id="ypg:YpAngola_A0694"/>
<dbReference type="PATRIC" id="fig|349746.12.peg.1642"/>
<dbReference type="UniPathway" id="UPA00075">
    <property type="reaction ID" value="UER00335"/>
</dbReference>
<dbReference type="GO" id="GO:0005737">
    <property type="term" value="C:cytoplasm"/>
    <property type="evidence" value="ECO:0007669"/>
    <property type="project" value="UniProtKB-SubCell"/>
</dbReference>
<dbReference type="GO" id="GO:0004019">
    <property type="term" value="F:adenylosuccinate synthase activity"/>
    <property type="evidence" value="ECO:0007669"/>
    <property type="project" value="UniProtKB-UniRule"/>
</dbReference>
<dbReference type="GO" id="GO:0005525">
    <property type="term" value="F:GTP binding"/>
    <property type="evidence" value="ECO:0007669"/>
    <property type="project" value="UniProtKB-UniRule"/>
</dbReference>
<dbReference type="GO" id="GO:0000287">
    <property type="term" value="F:magnesium ion binding"/>
    <property type="evidence" value="ECO:0007669"/>
    <property type="project" value="UniProtKB-UniRule"/>
</dbReference>
<dbReference type="GO" id="GO:0044208">
    <property type="term" value="P:'de novo' AMP biosynthetic process"/>
    <property type="evidence" value="ECO:0007669"/>
    <property type="project" value="UniProtKB-UniRule"/>
</dbReference>
<dbReference type="GO" id="GO:0046040">
    <property type="term" value="P:IMP metabolic process"/>
    <property type="evidence" value="ECO:0007669"/>
    <property type="project" value="TreeGrafter"/>
</dbReference>
<dbReference type="CDD" id="cd03108">
    <property type="entry name" value="AdSS"/>
    <property type="match status" value="1"/>
</dbReference>
<dbReference type="FunFam" id="1.10.300.10:FF:000001">
    <property type="entry name" value="Adenylosuccinate synthetase"/>
    <property type="match status" value="1"/>
</dbReference>
<dbReference type="FunFam" id="3.90.170.10:FF:000001">
    <property type="entry name" value="Adenylosuccinate synthetase"/>
    <property type="match status" value="1"/>
</dbReference>
<dbReference type="Gene3D" id="3.40.440.10">
    <property type="entry name" value="Adenylosuccinate Synthetase, subunit A, domain 1"/>
    <property type="match status" value="1"/>
</dbReference>
<dbReference type="Gene3D" id="1.10.300.10">
    <property type="entry name" value="Adenylosuccinate Synthetase, subunit A, domain 2"/>
    <property type="match status" value="1"/>
</dbReference>
<dbReference type="Gene3D" id="3.90.170.10">
    <property type="entry name" value="Adenylosuccinate Synthetase, subunit A, domain 3"/>
    <property type="match status" value="1"/>
</dbReference>
<dbReference type="HAMAP" id="MF_00011">
    <property type="entry name" value="Adenylosucc_synth"/>
    <property type="match status" value="1"/>
</dbReference>
<dbReference type="InterPro" id="IPR018220">
    <property type="entry name" value="Adenylosuccin_syn_GTP-bd"/>
</dbReference>
<dbReference type="InterPro" id="IPR033128">
    <property type="entry name" value="Adenylosuccin_syn_Lys_AS"/>
</dbReference>
<dbReference type="InterPro" id="IPR042109">
    <property type="entry name" value="Adenylosuccinate_synth_dom1"/>
</dbReference>
<dbReference type="InterPro" id="IPR042110">
    <property type="entry name" value="Adenylosuccinate_synth_dom2"/>
</dbReference>
<dbReference type="InterPro" id="IPR042111">
    <property type="entry name" value="Adenylosuccinate_synth_dom3"/>
</dbReference>
<dbReference type="InterPro" id="IPR001114">
    <property type="entry name" value="Adenylosuccinate_synthetase"/>
</dbReference>
<dbReference type="InterPro" id="IPR027417">
    <property type="entry name" value="P-loop_NTPase"/>
</dbReference>
<dbReference type="NCBIfam" id="NF002223">
    <property type="entry name" value="PRK01117.1"/>
    <property type="match status" value="1"/>
</dbReference>
<dbReference type="NCBIfam" id="TIGR00184">
    <property type="entry name" value="purA"/>
    <property type="match status" value="1"/>
</dbReference>
<dbReference type="PANTHER" id="PTHR11846">
    <property type="entry name" value="ADENYLOSUCCINATE SYNTHETASE"/>
    <property type="match status" value="1"/>
</dbReference>
<dbReference type="PANTHER" id="PTHR11846:SF0">
    <property type="entry name" value="ADENYLOSUCCINATE SYNTHETASE"/>
    <property type="match status" value="1"/>
</dbReference>
<dbReference type="Pfam" id="PF00709">
    <property type="entry name" value="Adenylsucc_synt"/>
    <property type="match status" value="1"/>
</dbReference>
<dbReference type="SMART" id="SM00788">
    <property type="entry name" value="Adenylsucc_synt"/>
    <property type="match status" value="1"/>
</dbReference>
<dbReference type="SUPFAM" id="SSF52540">
    <property type="entry name" value="P-loop containing nucleoside triphosphate hydrolases"/>
    <property type="match status" value="1"/>
</dbReference>
<dbReference type="PROSITE" id="PS01266">
    <property type="entry name" value="ADENYLOSUCCIN_SYN_1"/>
    <property type="match status" value="1"/>
</dbReference>
<dbReference type="PROSITE" id="PS00513">
    <property type="entry name" value="ADENYLOSUCCIN_SYN_2"/>
    <property type="match status" value="1"/>
</dbReference>
<reference key="1">
    <citation type="journal article" date="2010" name="J. Bacteriol.">
        <title>Genome sequence of the deep-rooted Yersinia pestis strain Angola reveals new insights into the evolution and pangenome of the plague bacterium.</title>
        <authorList>
            <person name="Eppinger M."/>
            <person name="Worsham P.L."/>
            <person name="Nikolich M.P."/>
            <person name="Riley D.R."/>
            <person name="Sebastian Y."/>
            <person name="Mou S."/>
            <person name="Achtman M."/>
            <person name="Lindler L.E."/>
            <person name="Ravel J."/>
        </authorList>
    </citation>
    <scope>NUCLEOTIDE SEQUENCE [LARGE SCALE GENOMIC DNA]</scope>
    <source>
        <strain>Angola</strain>
    </source>
</reference>
<proteinExistence type="inferred from homology"/>
<evidence type="ECO:0000255" key="1">
    <source>
        <dbReference type="HAMAP-Rule" id="MF_00011"/>
    </source>
</evidence>
<comment type="function">
    <text evidence="1">Plays an important role in the de novo pathway of purine nucleotide biosynthesis. Catalyzes the first committed step in the biosynthesis of AMP from IMP.</text>
</comment>
<comment type="catalytic activity">
    <reaction evidence="1">
        <text>IMP + L-aspartate + GTP = N(6)-(1,2-dicarboxyethyl)-AMP + GDP + phosphate + 2 H(+)</text>
        <dbReference type="Rhea" id="RHEA:15753"/>
        <dbReference type="ChEBI" id="CHEBI:15378"/>
        <dbReference type="ChEBI" id="CHEBI:29991"/>
        <dbReference type="ChEBI" id="CHEBI:37565"/>
        <dbReference type="ChEBI" id="CHEBI:43474"/>
        <dbReference type="ChEBI" id="CHEBI:57567"/>
        <dbReference type="ChEBI" id="CHEBI:58053"/>
        <dbReference type="ChEBI" id="CHEBI:58189"/>
        <dbReference type="EC" id="6.3.4.4"/>
    </reaction>
</comment>
<comment type="cofactor">
    <cofactor evidence="1">
        <name>Mg(2+)</name>
        <dbReference type="ChEBI" id="CHEBI:18420"/>
    </cofactor>
    <text evidence="1">Binds 1 Mg(2+) ion per subunit.</text>
</comment>
<comment type="pathway">
    <text evidence="1">Purine metabolism; AMP biosynthesis via de novo pathway; AMP from IMP: step 1/2.</text>
</comment>
<comment type="subunit">
    <text evidence="1">Homodimer.</text>
</comment>
<comment type="subcellular location">
    <subcellularLocation>
        <location evidence="1">Cytoplasm</location>
    </subcellularLocation>
</comment>
<comment type="similarity">
    <text evidence="1">Belongs to the adenylosuccinate synthetase family.</text>
</comment>
<name>PURA_YERPG</name>
<sequence length="432" mass="47278">MGKNVVVLGTQWGDEGKGKVVDLLTERAKYVVRYQGGHNAGHTLVINGEKTVLHLIPSGILRENVISIIGNGVVLAPDALMKEMTELEARGVPVRERLLLSEACPLILPYHVALDNAREKARGAKAIGTTGRGIGPAYEDKVARRGLRVSDLFNKETFAIKLKEIVEYHNFQLVHYYKEAAVDYQKVLDDVLAIADILTAMVVDVSELLDNARKQGELIMFEGAQGTLLDIDHGTYPYVTSSNTTAGGVATGSGLGPRYVDYVLGIVKAYSTRVGAGPFPTELNDETGEFLRKQGNEYGATTGRSRRTGWLDIVAVRRAVQINSLSGFCMTKLDVLDGLKEVKLCVGYRMPDGREVDTTPLAAEGWEGIEPIYETMPGWSETTFGVKEHSKLPQAALNYIQRVEELTGVPIDIISTGPDRDETMILRDPFDA</sequence>
<organism>
    <name type="scientific">Yersinia pestis bv. Antiqua (strain Angola)</name>
    <dbReference type="NCBI Taxonomy" id="349746"/>
    <lineage>
        <taxon>Bacteria</taxon>
        <taxon>Pseudomonadati</taxon>
        <taxon>Pseudomonadota</taxon>
        <taxon>Gammaproteobacteria</taxon>
        <taxon>Enterobacterales</taxon>
        <taxon>Yersiniaceae</taxon>
        <taxon>Yersinia</taxon>
    </lineage>
</organism>
<keyword id="KW-0963">Cytoplasm</keyword>
<keyword id="KW-0342">GTP-binding</keyword>
<keyword id="KW-0436">Ligase</keyword>
<keyword id="KW-0460">Magnesium</keyword>
<keyword id="KW-0479">Metal-binding</keyword>
<keyword id="KW-0547">Nucleotide-binding</keyword>
<keyword id="KW-0658">Purine biosynthesis</keyword>
<gene>
    <name evidence="1" type="primary">purA</name>
    <name type="ordered locus">YpAngola_A0694</name>
</gene>
<accession>A9QYM6</accession>
<feature type="chain" id="PRO_1000089357" description="Adenylosuccinate synthetase">
    <location>
        <begin position="1"/>
        <end position="432"/>
    </location>
</feature>
<feature type="active site" description="Proton acceptor" evidence="1">
    <location>
        <position position="14"/>
    </location>
</feature>
<feature type="active site" description="Proton donor" evidence="1">
    <location>
        <position position="42"/>
    </location>
</feature>
<feature type="binding site" evidence="1">
    <location>
        <begin position="13"/>
        <end position="19"/>
    </location>
    <ligand>
        <name>GTP</name>
        <dbReference type="ChEBI" id="CHEBI:37565"/>
    </ligand>
</feature>
<feature type="binding site" description="in other chain" evidence="1">
    <location>
        <begin position="14"/>
        <end position="17"/>
    </location>
    <ligand>
        <name>IMP</name>
        <dbReference type="ChEBI" id="CHEBI:58053"/>
        <note>ligand shared between dimeric partners</note>
    </ligand>
</feature>
<feature type="binding site" evidence="1">
    <location>
        <position position="14"/>
    </location>
    <ligand>
        <name>Mg(2+)</name>
        <dbReference type="ChEBI" id="CHEBI:18420"/>
    </ligand>
</feature>
<feature type="binding site" description="in other chain" evidence="1">
    <location>
        <begin position="39"/>
        <end position="42"/>
    </location>
    <ligand>
        <name>IMP</name>
        <dbReference type="ChEBI" id="CHEBI:58053"/>
        <note>ligand shared between dimeric partners</note>
    </ligand>
</feature>
<feature type="binding site" evidence="1">
    <location>
        <begin position="41"/>
        <end position="43"/>
    </location>
    <ligand>
        <name>GTP</name>
        <dbReference type="ChEBI" id="CHEBI:37565"/>
    </ligand>
</feature>
<feature type="binding site" evidence="1">
    <location>
        <position position="41"/>
    </location>
    <ligand>
        <name>Mg(2+)</name>
        <dbReference type="ChEBI" id="CHEBI:18420"/>
    </ligand>
</feature>
<feature type="binding site" description="in other chain" evidence="1">
    <location>
        <position position="130"/>
    </location>
    <ligand>
        <name>IMP</name>
        <dbReference type="ChEBI" id="CHEBI:58053"/>
        <note>ligand shared between dimeric partners</note>
    </ligand>
</feature>
<feature type="binding site" evidence="1">
    <location>
        <position position="144"/>
    </location>
    <ligand>
        <name>IMP</name>
        <dbReference type="ChEBI" id="CHEBI:58053"/>
        <note>ligand shared between dimeric partners</note>
    </ligand>
</feature>
<feature type="binding site" description="in other chain" evidence="1">
    <location>
        <position position="225"/>
    </location>
    <ligand>
        <name>IMP</name>
        <dbReference type="ChEBI" id="CHEBI:58053"/>
        <note>ligand shared between dimeric partners</note>
    </ligand>
</feature>
<feature type="binding site" description="in other chain" evidence="1">
    <location>
        <position position="240"/>
    </location>
    <ligand>
        <name>IMP</name>
        <dbReference type="ChEBI" id="CHEBI:58053"/>
        <note>ligand shared between dimeric partners</note>
    </ligand>
</feature>
<feature type="binding site" evidence="1">
    <location>
        <begin position="300"/>
        <end position="306"/>
    </location>
    <ligand>
        <name>substrate</name>
    </ligand>
</feature>
<feature type="binding site" description="in other chain" evidence="1">
    <location>
        <position position="304"/>
    </location>
    <ligand>
        <name>IMP</name>
        <dbReference type="ChEBI" id="CHEBI:58053"/>
        <note>ligand shared between dimeric partners</note>
    </ligand>
</feature>
<feature type="binding site" evidence="1">
    <location>
        <position position="306"/>
    </location>
    <ligand>
        <name>GTP</name>
        <dbReference type="ChEBI" id="CHEBI:37565"/>
    </ligand>
</feature>
<feature type="binding site" evidence="1">
    <location>
        <begin position="332"/>
        <end position="334"/>
    </location>
    <ligand>
        <name>GTP</name>
        <dbReference type="ChEBI" id="CHEBI:37565"/>
    </ligand>
</feature>
<feature type="binding site" evidence="1">
    <location>
        <begin position="415"/>
        <end position="417"/>
    </location>
    <ligand>
        <name>GTP</name>
        <dbReference type="ChEBI" id="CHEBI:37565"/>
    </ligand>
</feature>